<reference key="1">
    <citation type="journal article" date="2006" name="BMC Genomics">
        <title>The genome of the square archaeon Haloquadratum walsbyi: life at the limits of water activity.</title>
        <authorList>
            <person name="Bolhuis H."/>
            <person name="Palm P."/>
            <person name="Wende A."/>
            <person name="Falb M."/>
            <person name="Rampp M."/>
            <person name="Rodriguez-Valera F."/>
            <person name="Pfeiffer F."/>
            <person name="Oesterhelt D."/>
        </authorList>
    </citation>
    <scope>NUCLEOTIDE SEQUENCE [LARGE SCALE GENOMIC DNA]</scope>
    <source>
        <strain>DSM 16790 / HBSQ001</strain>
    </source>
</reference>
<organism>
    <name type="scientific">Haloquadratum walsbyi (strain DSM 16790 / HBSQ001)</name>
    <dbReference type="NCBI Taxonomy" id="362976"/>
    <lineage>
        <taxon>Archaea</taxon>
        <taxon>Methanobacteriati</taxon>
        <taxon>Methanobacteriota</taxon>
        <taxon>Stenosarchaea group</taxon>
        <taxon>Halobacteria</taxon>
        <taxon>Halobacteriales</taxon>
        <taxon>Haloferacaceae</taxon>
        <taxon>Haloquadratum</taxon>
    </lineage>
</organism>
<sequence>MTEDTETSSTGAGADDRTAAISRETAETTINVTLAVDGDGEATVDTGIGFFDHMLETFAKHGLFDLTVRCDGDLDIDDHHTVEDVGIVLGKSFNNALGEKRGIVRYADRSVPLDEAVATVIADISGRPHFEFSGSFSQPQIGGFTSDMARHFAYSFTMHSEITLHASIEGINAHHEVEALFKSLARTLDEATQLDPRRGDTPSTKGEL</sequence>
<accession>Q18DL1</accession>
<protein>
    <recommendedName>
        <fullName evidence="1">Imidazoleglycerol-phosphate dehydratase</fullName>
        <shortName evidence="1">IGPD</shortName>
        <ecNumber evidence="1">4.2.1.19</ecNumber>
    </recommendedName>
</protein>
<gene>
    <name evidence="1" type="primary">hisB</name>
    <name type="ordered locus">HQ_1026A</name>
</gene>
<keyword id="KW-0028">Amino-acid biosynthesis</keyword>
<keyword id="KW-0963">Cytoplasm</keyword>
<keyword id="KW-0368">Histidine biosynthesis</keyword>
<keyword id="KW-0456">Lyase</keyword>
<keyword id="KW-1185">Reference proteome</keyword>
<name>HIS7_HALWD</name>
<proteinExistence type="inferred from homology"/>
<dbReference type="EC" id="4.2.1.19" evidence="1"/>
<dbReference type="EMBL" id="AM180088">
    <property type="protein sequence ID" value="CAJ51156.1"/>
    <property type="molecule type" value="Genomic_DNA"/>
</dbReference>
<dbReference type="RefSeq" id="WP_011570323.1">
    <property type="nucleotide sequence ID" value="NC_008212.1"/>
</dbReference>
<dbReference type="SMR" id="Q18DL1"/>
<dbReference type="STRING" id="362976.HQ_1026A"/>
<dbReference type="GeneID" id="4194116"/>
<dbReference type="KEGG" id="hwa:HQ_1026A"/>
<dbReference type="eggNOG" id="arCOG04398">
    <property type="taxonomic scope" value="Archaea"/>
</dbReference>
<dbReference type="HOGENOM" id="CLU_044308_3_0_2"/>
<dbReference type="UniPathway" id="UPA00031">
    <property type="reaction ID" value="UER00011"/>
</dbReference>
<dbReference type="Proteomes" id="UP000001975">
    <property type="component" value="Chromosome"/>
</dbReference>
<dbReference type="GO" id="GO:0005737">
    <property type="term" value="C:cytoplasm"/>
    <property type="evidence" value="ECO:0007669"/>
    <property type="project" value="UniProtKB-SubCell"/>
</dbReference>
<dbReference type="GO" id="GO:0004424">
    <property type="term" value="F:imidazoleglycerol-phosphate dehydratase activity"/>
    <property type="evidence" value="ECO:0007669"/>
    <property type="project" value="UniProtKB-UniRule"/>
</dbReference>
<dbReference type="GO" id="GO:0000105">
    <property type="term" value="P:L-histidine biosynthetic process"/>
    <property type="evidence" value="ECO:0007669"/>
    <property type="project" value="UniProtKB-UniRule"/>
</dbReference>
<dbReference type="CDD" id="cd07914">
    <property type="entry name" value="IGPD"/>
    <property type="match status" value="1"/>
</dbReference>
<dbReference type="FunFam" id="3.30.230.40:FF:000001">
    <property type="entry name" value="Imidazoleglycerol-phosphate dehydratase HisB"/>
    <property type="match status" value="1"/>
</dbReference>
<dbReference type="FunFam" id="3.30.230.40:FF:000003">
    <property type="entry name" value="Imidazoleglycerol-phosphate dehydratase HisB"/>
    <property type="match status" value="1"/>
</dbReference>
<dbReference type="Gene3D" id="3.30.230.40">
    <property type="entry name" value="Imidazole glycerol phosphate dehydratase, domain 1"/>
    <property type="match status" value="2"/>
</dbReference>
<dbReference type="HAMAP" id="MF_00076">
    <property type="entry name" value="HisB"/>
    <property type="match status" value="1"/>
</dbReference>
<dbReference type="InterPro" id="IPR038494">
    <property type="entry name" value="IGPD_sf"/>
</dbReference>
<dbReference type="InterPro" id="IPR000807">
    <property type="entry name" value="ImidazoleglycerolP_deHydtase"/>
</dbReference>
<dbReference type="InterPro" id="IPR020565">
    <property type="entry name" value="ImidazoleglycerP_deHydtase_CS"/>
</dbReference>
<dbReference type="InterPro" id="IPR020568">
    <property type="entry name" value="Ribosomal_Su5_D2-typ_SF"/>
</dbReference>
<dbReference type="NCBIfam" id="NF002111">
    <property type="entry name" value="PRK00951.2-1"/>
    <property type="match status" value="1"/>
</dbReference>
<dbReference type="NCBIfam" id="NF002114">
    <property type="entry name" value="PRK00951.2-4"/>
    <property type="match status" value="1"/>
</dbReference>
<dbReference type="NCBIfam" id="NF002116">
    <property type="entry name" value="PRK00951.2-6"/>
    <property type="match status" value="1"/>
</dbReference>
<dbReference type="PANTHER" id="PTHR23133:SF2">
    <property type="entry name" value="IMIDAZOLEGLYCEROL-PHOSPHATE DEHYDRATASE"/>
    <property type="match status" value="1"/>
</dbReference>
<dbReference type="PANTHER" id="PTHR23133">
    <property type="entry name" value="IMIDAZOLEGLYCEROL-PHOSPHATE DEHYDRATASE HIS7"/>
    <property type="match status" value="1"/>
</dbReference>
<dbReference type="Pfam" id="PF00475">
    <property type="entry name" value="IGPD"/>
    <property type="match status" value="1"/>
</dbReference>
<dbReference type="SUPFAM" id="SSF54211">
    <property type="entry name" value="Ribosomal protein S5 domain 2-like"/>
    <property type="match status" value="2"/>
</dbReference>
<dbReference type="PROSITE" id="PS00954">
    <property type="entry name" value="IGP_DEHYDRATASE_1"/>
    <property type="match status" value="1"/>
</dbReference>
<dbReference type="PROSITE" id="PS00955">
    <property type="entry name" value="IGP_DEHYDRATASE_2"/>
    <property type="match status" value="1"/>
</dbReference>
<comment type="catalytic activity">
    <reaction evidence="1">
        <text>D-erythro-1-(imidazol-4-yl)glycerol 3-phosphate = 3-(imidazol-4-yl)-2-oxopropyl phosphate + H2O</text>
        <dbReference type="Rhea" id="RHEA:11040"/>
        <dbReference type="ChEBI" id="CHEBI:15377"/>
        <dbReference type="ChEBI" id="CHEBI:57766"/>
        <dbReference type="ChEBI" id="CHEBI:58278"/>
        <dbReference type="EC" id="4.2.1.19"/>
    </reaction>
</comment>
<comment type="pathway">
    <text evidence="1">Amino-acid biosynthesis; L-histidine biosynthesis; L-histidine from 5-phospho-alpha-D-ribose 1-diphosphate: step 6/9.</text>
</comment>
<comment type="subcellular location">
    <subcellularLocation>
        <location evidence="1">Cytoplasm</location>
    </subcellularLocation>
</comment>
<comment type="similarity">
    <text evidence="1">Belongs to the imidazoleglycerol-phosphate dehydratase family.</text>
</comment>
<evidence type="ECO:0000255" key="1">
    <source>
        <dbReference type="HAMAP-Rule" id="MF_00076"/>
    </source>
</evidence>
<evidence type="ECO:0000256" key="2">
    <source>
        <dbReference type="SAM" id="MobiDB-lite"/>
    </source>
</evidence>
<feature type="chain" id="PRO_0000336360" description="Imidazoleglycerol-phosphate dehydratase">
    <location>
        <begin position="1"/>
        <end position="208"/>
    </location>
</feature>
<feature type="region of interest" description="Disordered" evidence="2">
    <location>
        <begin position="1"/>
        <end position="22"/>
    </location>
</feature>